<protein>
    <recommendedName>
        <fullName evidence="1">3-hydroxyacyl-[acyl-carrier-protein] dehydratase FabZ</fullName>
        <ecNumber evidence="1">4.2.1.59</ecNumber>
    </recommendedName>
    <alternativeName>
        <fullName evidence="1">(3R)-hydroxymyristoyl-[acyl-carrier-protein] dehydratase</fullName>
        <shortName evidence="1">(3R)-hydroxymyristoyl-ACP dehydrase</shortName>
    </alternativeName>
    <alternativeName>
        <fullName evidence="1">Beta-hydroxyacyl-ACP dehydratase</fullName>
    </alternativeName>
</protein>
<reference key="1">
    <citation type="submission" date="2006-08" db="EMBL/GenBank/DDBJ databases">
        <title>Complete sequence of chromosome 1 of Burkholderia cenocepacia HI2424.</title>
        <authorList>
            <person name="Copeland A."/>
            <person name="Lucas S."/>
            <person name="Lapidus A."/>
            <person name="Barry K."/>
            <person name="Detter J.C."/>
            <person name="Glavina del Rio T."/>
            <person name="Hammon N."/>
            <person name="Israni S."/>
            <person name="Pitluck S."/>
            <person name="Chain P."/>
            <person name="Malfatti S."/>
            <person name="Shin M."/>
            <person name="Vergez L."/>
            <person name="Schmutz J."/>
            <person name="Larimer F."/>
            <person name="Land M."/>
            <person name="Hauser L."/>
            <person name="Kyrpides N."/>
            <person name="Kim E."/>
            <person name="LiPuma J.J."/>
            <person name="Gonzalez C.F."/>
            <person name="Konstantinidis K."/>
            <person name="Tiedje J.M."/>
            <person name="Richardson P."/>
        </authorList>
    </citation>
    <scope>NUCLEOTIDE SEQUENCE [LARGE SCALE GENOMIC DNA]</scope>
    <source>
        <strain>HI2424</strain>
    </source>
</reference>
<name>FABZ_BURCH</name>
<comment type="function">
    <text evidence="1">Involved in unsaturated fatty acids biosynthesis. Catalyzes the dehydration of short chain beta-hydroxyacyl-ACPs and long chain saturated and unsaturated beta-hydroxyacyl-ACPs.</text>
</comment>
<comment type="catalytic activity">
    <reaction evidence="1">
        <text>a (3R)-hydroxyacyl-[ACP] = a (2E)-enoyl-[ACP] + H2O</text>
        <dbReference type="Rhea" id="RHEA:13097"/>
        <dbReference type="Rhea" id="RHEA-COMP:9925"/>
        <dbReference type="Rhea" id="RHEA-COMP:9945"/>
        <dbReference type="ChEBI" id="CHEBI:15377"/>
        <dbReference type="ChEBI" id="CHEBI:78784"/>
        <dbReference type="ChEBI" id="CHEBI:78827"/>
        <dbReference type="EC" id="4.2.1.59"/>
    </reaction>
</comment>
<comment type="subcellular location">
    <subcellularLocation>
        <location evidence="1">Cytoplasm</location>
    </subcellularLocation>
</comment>
<comment type="similarity">
    <text evidence="1">Belongs to the thioester dehydratase family. FabZ subfamily.</text>
</comment>
<proteinExistence type="inferred from homology"/>
<evidence type="ECO:0000255" key="1">
    <source>
        <dbReference type="HAMAP-Rule" id="MF_00406"/>
    </source>
</evidence>
<organism>
    <name type="scientific">Burkholderia cenocepacia (strain HI2424)</name>
    <dbReference type="NCBI Taxonomy" id="331272"/>
    <lineage>
        <taxon>Bacteria</taxon>
        <taxon>Pseudomonadati</taxon>
        <taxon>Pseudomonadota</taxon>
        <taxon>Betaproteobacteria</taxon>
        <taxon>Burkholderiales</taxon>
        <taxon>Burkholderiaceae</taxon>
        <taxon>Burkholderia</taxon>
        <taxon>Burkholderia cepacia complex</taxon>
    </lineage>
</organism>
<accession>A0K8D2</accession>
<gene>
    <name evidence="1" type="primary">fabZ</name>
    <name type="ordered locus">Bcen2424_2008</name>
</gene>
<keyword id="KW-0963">Cytoplasm</keyword>
<keyword id="KW-0441">Lipid A biosynthesis</keyword>
<keyword id="KW-0444">Lipid biosynthesis</keyword>
<keyword id="KW-0443">Lipid metabolism</keyword>
<keyword id="KW-0456">Lyase</keyword>
<feature type="chain" id="PRO_0000301883" description="3-hydroxyacyl-[acyl-carrier-protein] dehydratase FabZ">
    <location>
        <begin position="1"/>
        <end position="155"/>
    </location>
</feature>
<feature type="active site" evidence="1">
    <location>
        <position position="54"/>
    </location>
</feature>
<sequence length="155" mass="17392">MSTEKINLDIHKILTLLPHRYPILLVDRVLELEPHKGIKALKNVSINEPFFQGHFPKRPVMPGVLILEALAQAAALLTFAEEQPKDPENTLYYFVGIDGARFKRVVEPGDQLILNVTFERYIRGIWKFKAVAEVDGKVAAEAELMCTVKTADAAP</sequence>
<dbReference type="EC" id="4.2.1.59" evidence="1"/>
<dbReference type="EMBL" id="CP000458">
    <property type="protein sequence ID" value="ABK08759.1"/>
    <property type="molecule type" value="Genomic_DNA"/>
</dbReference>
<dbReference type="RefSeq" id="WP_006495559.1">
    <property type="nucleotide sequence ID" value="NC_008542.1"/>
</dbReference>
<dbReference type="SMR" id="A0K8D2"/>
<dbReference type="GeneID" id="98105474"/>
<dbReference type="KEGG" id="bch:Bcen2424_2008"/>
<dbReference type="HOGENOM" id="CLU_078912_1_0_4"/>
<dbReference type="GO" id="GO:0005737">
    <property type="term" value="C:cytoplasm"/>
    <property type="evidence" value="ECO:0007669"/>
    <property type="project" value="UniProtKB-SubCell"/>
</dbReference>
<dbReference type="GO" id="GO:0016020">
    <property type="term" value="C:membrane"/>
    <property type="evidence" value="ECO:0007669"/>
    <property type="project" value="GOC"/>
</dbReference>
<dbReference type="GO" id="GO:0019171">
    <property type="term" value="F:(3R)-hydroxyacyl-[acyl-carrier-protein] dehydratase activity"/>
    <property type="evidence" value="ECO:0007669"/>
    <property type="project" value="UniProtKB-EC"/>
</dbReference>
<dbReference type="GO" id="GO:0006633">
    <property type="term" value="P:fatty acid biosynthetic process"/>
    <property type="evidence" value="ECO:0007669"/>
    <property type="project" value="UniProtKB-UniRule"/>
</dbReference>
<dbReference type="GO" id="GO:0009245">
    <property type="term" value="P:lipid A biosynthetic process"/>
    <property type="evidence" value="ECO:0007669"/>
    <property type="project" value="UniProtKB-UniRule"/>
</dbReference>
<dbReference type="CDD" id="cd01288">
    <property type="entry name" value="FabZ"/>
    <property type="match status" value="1"/>
</dbReference>
<dbReference type="FunFam" id="3.10.129.10:FF:000001">
    <property type="entry name" value="3-hydroxyacyl-[acyl-carrier-protein] dehydratase FabZ"/>
    <property type="match status" value="1"/>
</dbReference>
<dbReference type="Gene3D" id="3.10.129.10">
    <property type="entry name" value="Hotdog Thioesterase"/>
    <property type="match status" value="1"/>
</dbReference>
<dbReference type="HAMAP" id="MF_00406">
    <property type="entry name" value="FabZ"/>
    <property type="match status" value="1"/>
</dbReference>
<dbReference type="InterPro" id="IPR013114">
    <property type="entry name" value="FabA_FabZ"/>
</dbReference>
<dbReference type="InterPro" id="IPR010084">
    <property type="entry name" value="FabZ"/>
</dbReference>
<dbReference type="InterPro" id="IPR029069">
    <property type="entry name" value="HotDog_dom_sf"/>
</dbReference>
<dbReference type="NCBIfam" id="TIGR01750">
    <property type="entry name" value="fabZ"/>
    <property type="match status" value="1"/>
</dbReference>
<dbReference type="NCBIfam" id="NF000582">
    <property type="entry name" value="PRK00006.1"/>
    <property type="match status" value="1"/>
</dbReference>
<dbReference type="PANTHER" id="PTHR30272">
    <property type="entry name" value="3-HYDROXYACYL-[ACYL-CARRIER-PROTEIN] DEHYDRATASE"/>
    <property type="match status" value="1"/>
</dbReference>
<dbReference type="PANTHER" id="PTHR30272:SF1">
    <property type="entry name" value="3-HYDROXYACYL-[ACYL-CARRIER-PROTEIN] DEHYDRATASE"/>
    <property type="match status" value="1"/>
</dbReference>
<dbReference type="Pfam" id="PF07977">
    <property type="entry name" value="FabA"/>
    <property type="match status" value="1"/>
</dbReference>
<dbReference type="SUPFAM" id="SSF54637">
    <property type="entry name" value="Thioesterase/thiol ester dehydrase-isomerase"/>
    <property type="match status" value="1"/>
</dbReference>